<keyword id="KW-1003">Cell membrane</keyword>
<keyword id="KW-1015">Disulfide bond</keyword>
<keyword id="KW-0325">Glycoprotein</keyword>
<keyword id="KW-0472">Membrane</keyword>
<keyword id="KW-0675">Receptor</keyword>
<keyword id="KW-0677">Repeat</keyword>
<keyword id="KW-0732">Signal</keyword>
<keyword id="KW-0812">Transmembrane</keyword>
<keyword id="KW-1133">Transmembrane helix</keyword>
<feature type="signal peptide" evidence="2">
    <location>
        <begin position="1"/>
        <end position="20"/>
    </location>
</feature>
<feature type="chain" id="PRO_0000432616" description="Interferon alpha/beta receptor 1a">
    <location>
        <begin position="21"/>
        <end position="405"/>
    </location>
</feature>
<feature type="topological domain" description="Extracellular" evidence="2">
    <location>
        <begin position="21"/>
        <end position="233"/>
    </location>
</feature>
<feature type="transmembrane region" description="Helical" evidence="2">
    <location>
        <begin position="234"/>
        <end position="254"/>
    </location>
</feature>
<feature type="topological domain" description="Cytoplasmic" evidence="2">
    <location>
        <begin position="255"/>
        <end position="405"/>
    </location>
</feature>
<feature type="domain" description="Fibronectin type-III 1" evidence="3">
    <location>
        <begin position="22"/>
        <end position="123"/>
    </location>
</feature>
<feature type="domain" description="Fibronectin type-III 2" evidence="3">
    <location>
        <begin position="126"/>
        <end position="228"/>
    </location>
</feature>
<feature type="region of interest" description="Disordered" evidence="5">
    <location>
        <begin position="325"/>
        <end position="374"/>
    </location>
</feature>
<feature type="compositionally biased region" description="Basic and acidic residues" evidence="5">
    <location>
        <begin position="334"/>
        <end position="343"/>
    </location>
</feature>
<feature type="compositionally biased region" description="Polar residues" evidence="5">
    <location>
        <begin position="348"/>
        <end position="359"/>
    </location>
</feature>
<feature type="glycosylation site" description="N-linked (GlcNAc...) asparagine" evidence="4">
    <location>
        <position position="27"/>
    </location>
</feature>
<feature type="glycosylation site" description="N-linked (GlcNAc...) asparagine" evidence="4">
    <location>
        <position position="70"/>
    </location>
</feature>
<feature type="glycosylation site" description="N-linked (GlcNAc...) asparagine" evidence="4">
    <location>
        <position position="212"/>
    </location>
</feature>
<feature type="disulfide bond" evidence="2">
    <location>
        <begin position="75"/>
        <end position="83"/>
    </location>
</feature>
<feature type="disulfide bond" evidence="2">
    <location>
        <begin position="201"/>
        <end position="222"/>
    </location>
</feature>
<reference key="1">
    <citation type="journal article" date="2013" name="PLoS Pathog.">
        <title>Intracellular interferons in fish: a unique means to combat viral infection.</title>
        <authorList>
            <person name="Chang M.X."/>
            <person name="Zou J."/>
            <person name="Nie P."/>
            <person name="Huang B."/>
            <person name="Yu Z."/>
            <person name="Collet B."/>
            <person name="Secombes C.J."/>
        </authorList>
    </citation>
    <scope>NUCLEOTIDE SEQUENCE [MRNA]</scope>
    <scope>INDUCTION BY POLY(I:C)</scope>
</reference>
<organism evidence="9">
    <name type="scientific">Oncorhynchus mykiss</name>
    <name type="common">Rainbow trout</name>
    <name type="synonym">Salmo gairdneri</name>
    <dbReference type="NCBI Taxonomy" id="8022"/>
    <lineage>
        <taxon>Eukaryota</taxon>
        <taxon>Metazoa</taxon>
        <taxon>Chordata</taxon>
        <taxon>Craniata</taxon>
        <taxon>Vertebrata</taxon>
        <taxon>Euteleostomi</taxon>
        <taxon>Actinopterygii</taxon>
        <taxon>Neopterygii</taxon>
        <taxon>Teleostei</taxon>
        <taxon>Protacanthopterygii</taxon>
        <taxon>Salmoniformes</taxon>
        <taxon>Salmonidae</taxon>
        <taxon>Salmoninae</taxon>
        <taxon>Oncorhynchus</taxon>
    </lineage>
</organism>
<comment type="function">
    <text evidence="1">Together with IFNAR2, forms the heterodimeric receptor for type I interferons (including interferons alpha, beta, epsilon, omega and kappa). Type I interferon binding activates the JAK-STAT signaling cascade, resulting in transcriptional activation or repression of interferon-regulated genes that encode the effectors of the interferon response. Mechanistically, type I interferon-binding brings the IFNAR1 and IFNAR2 subunits into close proximity with one another, driving their associated Janus kinases (JAKs) (TYK2 bound to IFNAR1 and JAK1 bound to IFNAR2) to cross-phosphorylate one another. The activated kinases phosphorylate specific tyrosine residues on the intracellular domains of IFNAR1 and IFNAR2, forming docking sites for the STAT transcription factors. STAT proteins are then phosphorylated by the JAKs, promoting their translocation into the nucleus to regulate expression of interferon-regulated genes.</text>
</comment>
<comment type="subunit">
    <text evidence="1">Heterodimer with IFNAR2; forming the receptor for type I interferon.</text>
</comment>
<comment type="subcellular location">
    <subcellularLocation>
        <location evidence="1">Cell membrane</location>
        <topology evidence="1">Single-pass type I membrane protein</topology>
    </subcellularLocation>
</comment>
<comment type="induction">
    <text evidence="6">In the fibroblastic RTG-2 cell line, induced by polyinosine-polycytidylic acid (poly(I:C)), a synthetic analog of dsRNA, that binds TLR3.</text>
</comment>
<comment type="similarity">
    <text evidence="8">Belongs to the type II cytokine receptor family.</text>
</comment>
<evidence type="ECO:0000250" key="1">
    <source>
        <dbReference type="UniProtKB" id="P17181"/>
    </source>
</evidence>
<evidence type="ECO:0000255" key="2"/>
<evidence type="ECO:0000255" key="3">
    <source>
        <dbReference type="PROSITE-ProRule" id="PRU00316"/>
    </source>
</evidence>
<evidence type="ECO:0000255" key="4">
    <source>
        <dbReference type="PROSITE-ProRule" id="PRU00498"/>
    </source>
</evidence>
<evidence type="ECO:0000256" key="5">
    <source>
        <dbReference type="SAM" id="MobiDB-lite"/>
    </source>
</evidence>
<evidence type="ECO:0000269" key="6">
    <source>
    </source>
</evidence>
<evidence type="ECO:0000303" key="7">
    <source>
    </source>
</evidence>
<evidence type="ECO:0000305" key="8"/>
<evidence type="ECO:0000312" key="9">
    <source>
        <dbReference type="EMBL" id="ADU04482.1"/>
    </source>
</evidence>
<sequence length="405" mass="46095">MKVGFALVLLWSLPITNVLAELPQPQNLTLLTLNTQYVLTWDWDQTTTGNSVSFTVEYMAKYKMKMKKKNWSRVCERTTRTRCDLTGSDLHYLGMYVLRVRASADGVNSDWVNKDFCPDIDASLGPPSRVELAPVGNLLDVTISDPLTSTQHSMKEHVLFLYYRILYWSRSDDPQGLKPKVLDSSNNLVTLPELEAWTWYCVMIQSRYDYYNKTSSYTEPQCMQTEGDTPYGQIFLYFLVSMMVCFLLVLLSSYAFFRFYRGLKNTFYPSIQLPAHIQEYLCDSSPGSDMPRLITADSEAELCCDKLTICPEVVLLEIHVPPPLTAPPSELEQDSGRRIRQDSGDSGIYSTEGGSAQQGRSGGEPIRRDQEVDSWQTLEQVKMEEMGRELADERDLDEGVVDICV</sequence>
<dbReference type="EMBL" id="GU319961">
    <property type="protein sequence ID" value="ADU04482.1"/>
    <property type="molecule type" value="mRNA"/>
</dbReference>
<dbReference type="RefSeq" id="NP_001268239.1">
    <property type="nucleotide sequence ID" value="NM_001281310.1"/>
</dbReference>
<dbReference type="SMR" id="K7NA32"/>
<dbReference type="GlyCosmos" id="K7NA32">
    <property type="glycosylation" value="3 sites, No reported glycans"/>
</dbReference>
<dbReference type="GeneID" id="101867533"/>
<dbReference type="Proteomes" id="UP000694395">
    <property type="component" value="Unplaced"/>
</dbReference>
<dbReference type="GO" id="GO:0005886">
    <property type="term" value="C:plasma membrane"/>
    <property type="evidence" value="ECO:0007669"/>
    <property type="project" value="UniProtKB-SubCell"/>
</dbReference>
<dbReference type="GO" id="GO:0004904">
    <property type="term" value="F:interferon receptor activity"/>
    <property type="evidence" value="ECO:0007669"/>
    <property type="project" value="TreeGrafter"/>
</dbReference>
<dbReference type="GO" id="GO:0060337">
    <property type="term" value="P:type I interferon-mediated signaling pathway"/>
    <property type="evidence" value="ECO:0000315"/>
    <property type="project" value="AgBase"/>
</dbReference>
<dbReference type="FunFam" id="2.60.40.10:FF:002256">
    <property type="entry name" value="Interferon alpha/beta receptor 1a"/>
    <property type="match status" value="1"/>
</dbReference>
<dbReference type="Gene3D" id="2.60.40.10">
    <property type="entry name" value="Immunoglobulins"/>
    <property type="match status" value="2"/>
</dbReference>
<dbReference type="InterPro" id="IPR003961">
    <property type="entry name" value="FN3_dom"/>
</dbReference>
<dbReference type="InterPro" id="IPR036116">
    <property type="entry name" value="FN3_sf"/>
</dbReference>
<dbReference type="InterPro" id="IPR013783">
    <property type="entry name" value="Ig-like_fold"/>
</dbReference>
<dbReference type="InterPro" id="IPR015373">
    <property type="entry name" value="Interferon/interleukin_rcp_dom"/>
</dbReference>
<dbReference type="InterPro" id="IPR050650">
    <property type="entry name" value="Type-II_Cytokine-TF_Rcpt"/>
</dbReference>
<dbReference type="PANTHER" id="PTHR20859:SF85">
    <property type="entry name" value="INTERFERON ALPHA_BETA RECEPTOR 1 ISOFORM X1"/>
    <property type="match status" value="1"/>
</dbReference>
<dbReference type="PANTHER" id="PTHR20859">
    <property type="entry name" value="INTERFERON/INTERLEUKIN RECEPTOR"/>
    <property type="match status" value="1"/>
</dbReference>
<dbReference type="Pfam" id="PF09294">
    <property type="entry name" value="Interfer-bind"/>
    <property type="match status" value="1"/>
</dbReference>
<dbReference type="Pfam" id="PF01108">
    <property type="entry name" value="Tissue_fac"/>
    <property type="match status" value="1"/>
</dbReference>
<dbReference type="SUPFAM" id="SSF49265">
    <property type="entry name" value="Fibronectin type III"/>
    <property type="match status" value="2"/>
</dbReference>
<dbReference type="PROSITE" id="PS50853">
    <property type="entry name" value="FN3"/>
    <property type="match status" value="2"/>
</dbReference>
<name>IRA1A_ONCMY</name>
<gene>
    <name evidence="7" type="primary">ifnar1a</name>
</gene>
<proteinExistence type="evidence at transcript level"/>
<protein>
    <recommendedName>
        <fullName>Interferon alpha/beta receptor 1a</fullName>
    </recommendedName>
    <alternativeName>
        <fullName evidence="9">Membrane-associated type I interferon receptor</fullName>
        <shortName evidence="7">mIFNAR1</shortName>
    </alternativeName>
    <alternativeName>
        <fullName>Type I interferon receptor 1a</fullName>
    </alternativeName>
</protein>
<accession>K7NA32</accession>